<proteinExistence type="evidence at protein level"/>
<evidence type="ECO:0000255" key="1"/>
<evidence type="ECO:0000269" key="2">
    <source>
    </source>
</evidence>
<evidence type="ECO:0000269" key="3">
    <source>
    </source>
</evidence>
<evidence type="ECO:0000269" key="4">
    <source>
    </source>
</evidence>
<evidence type="ECO:0000303" key="5">
    <source>
    </source>
</evidence>
<evidence type="ECO:0000303" key="6">
    <source>
    </source>
</evidence>
<evidence type="ECO:0000305" key="7"/>
<evidence type="ECO:0007829" key="8">
    <source>
        <dbReference type="PDB" id="3QK9"/>
    </source>
</evidence>
<evidence type="ECO:0007829" key="9">
    <source>
        <dbReference type="PDB" id="8E1M"/>
    </source>
</evidence>
<dbReference type="EMBL" id="Z46881">
    <property type="protein sequence ID" value="CAA86970.1"/>
    <property type="molecule type" value="Genomic_DNA"/>
</dbReference>
<dbReference type="EMBL" id="X67276">
    <property type="protein sequence ID" value="CAA47693.1"/>
    <property type="molecule type" value="Genomic_DNA"/>
</dbReference>
<dbReference type="EMBL" id="BK006942">
    <property type="protein sequence ID" value="DAA08523.1"/>
    <property type="molecule type" value="Genomic_DNA"/>
</dbReference>
<dbReference type="PIR" id="S25196">
    <property type="entry name" value="S25196"/>
</dbReference>
<dbReference type="RefSeq" id="NP_012242.1">
    <property type="nucleotide sequence ID" value="NM_001179372.1"/>
</dbReference>
<dbReference type="PDB" id="2FXT">
    <property type="method" value="X-ray"/>
    <property type="resolution" value="3.20 A"/>
    <property type="chains" value="A=234-425"/>
</dbReference>
<dbReference type="PDB" id="3QK9">
    <property type="method" value="X-ray"/>
    <property type="resolution" value="3.10 A"/>
    <property type="chains" value="A/B=210-431"/>
</dbReference>
<dbReference type="PDB" id="8E1M">
    <property type="method" value="EM"/>
    <property type="resolution" value="2.90 A"/>
    <property type="chains" value="C=1-431"/>
</dbReference>
<dbReference type="PDBsum" id="2FXT"/>
<dbReference type="PDBsum" id="3QK9"/>
<dbReference type="PDBsum" id="8E1M"/>
<dbReference type="SMR" id="Q01852"/>
<dbReference type="BioGRID" id="34966">
    <property type="interactions" value="111"/>
</dbReference>
<dbReference type="ComplexPortal" id="CPX-539">
    <property type="entry name" value="TIM23 mitochondrial inner membrane pre-sequence translocase complex, motor variant"/>
</dbReference>
<dbReference type="DIP" id="DIP-694N"/>
<dbReference type="FunCoup" id="Q01852">
    <property type="interactions" value="1252"/>
</dbReference>
<dbReference type="IntAct" id="Q01852">
    <property type="interactions" value="25"/>
</dbReference>
<dbReference type="MINT" id="Q01852"/>
<dbReference type="STRING" id="4932.YIL022W"/>
<dbReference type="TCDB" id="3.A.8.1.1">
    <property type="family name" value="the mitochondrial protein translocase (mpt) family"/>
</dbReference>
<dbReference type="iPTMnet" id="Q01852"/>
<dbReference type="PaxDb" id="4932-YIL022W"/>
<dbReference type="PeptideAtlas" id="Q01852"/>
<dbReference type="EnsemblFungi" id="YIL022W_mRNA">
    <property type="protein sequence ID" value="YIL022W"/>
    <property type="gene ID" value="YIL022W"/>
</dbReference>
<dbReference type="GeneID" id="854790"/>
<dbReference type="KEGG" id="sce:YIL022W"/>
<dbReference type="AGR" id="SGD:S000001284"/>
<dbReference type="SGD" id="S000001284">
    <property type="gene designation" value="TIM44"/>
</dbReference>
<dbReference type="VEuPathDB" id="FungiDB:YIL022W"/>
<dbReference type="eggNOG" id="KOG2580">
    <property type="taxonomic scope" value="Eukaryota"/>
</dbReference>
<dbReference type="GeneTree" id="ENSGT00390000000051"/>
<dbReference type="HOGENOM" id="CLU_020932_2_0_1"/>
<dbReference type="InParanoid" id="Q01852"/>
<dbReference type="OMA" id="NFQMEPF"/>
<dbReference type="OrthoDB" id="10265990at2759"/>
<dbReference type="BioCyc" id="YEAST:G3O-31297-MONOMER"/>
<dbReference type="BioGRID-ORCS" id="854790">
    <property type="hits" value="2 hits in 10 CRISPR screens"/>
</dbReference>
<dbReference type="EvolutionaryTrace" id="Q01852"/>
<dbReference type="PRO" id="PR:Q01852"/>
<dbReference type="Proteomes" id="UP000002311">
    <property type="component" value="Chromosome IX"/>
</dbReference>
<dbReference type="RNAct" id="Q01852">
    <property type="molecule type" value="protein"/>
</dbReference>
<dbReference type="GO" id="GO:0031314">
    <property type="term" value="C:extrinsic component of mitochondrial inner membrane"/>
    <property type="evidence" value="ECO:0000314"/>
    <property type="project" value="UniProtKB"/>
</dbReference>
<dbReference type="GO" id="GO:0005743">
    <property type="term" value="C:mitochondrial inner membrane"/>
    <property type="evidence" value="ECO:0000318"/>
    <property type="project" value="GO_Central"/>
</dbReference>
<dbReference type="GO" id="GO:0005739">
    <property type="term" value="C:mitochondrion"/>
    <property type="evidence" value="ECO:0007005"/>
    <property type="project" value="SGD"/>
</dbReference>
<dbReference type="GO" id="GO:0001405">
    <property type="term" value="C:PAM complex, Tim23 associated import motor"/>
    <property type="evidence" value="ECO:0000314"/>
    <property type="project" value="SGD"/>
</dbReference>
<dbReference type="GO" id="GO:0005744">
    <property type="term" value="C:TIM23 mitochondrial import inner membrane translocase complex"/>
    <property type="evidence" value="ECO:0000314"/>
    <property type="project" value="UniProtKB"/>
</dbReference>
<dbReference type="GO" id="GO:0005524">
    <property type="term" value="F:ATP binding"/>
    <property type="evidence" value="ECO:0007669"/>
    <property type="project" value="UniProtKB-KW"/>
</dbReference>
<dbReference type="GO" id="GO:0051087">
    <property type="term" value="F:protein-folding chaperone binding"/>
    <property type="evidence" value="ECO:0000315"/>
    <property type="project" value="SGD"/>
</dbReference>
<dbReference type="GO" id="GO:0030674">
    <property type="term" value="F:protein-macromolecule adaptor activity"/>
    <property type="evidence" value="ECO:0000315"/>
    <property type="project" value="SGD"/>
</dbReference>
<dbReference type="GO" id="GO:0006886">
    <property type="term" value="P:intracellular protein transport"/>
    <property type="evidence" value="ECO:0000303"/>
    <property type="project" value="ComplexPortal"/>
</dbReference>
<dbReference type="GO" id="GO:0030150">
    <property type="term" value="P:protein import into mitochondrial matrix"/>
    <property type="evidence" value="ECO:0000315"/>
    <property type="project" value="UniProtKB"/>
</dbReference>
<dbReference type="FunFam" id="3.10.450.240:FF:000002">
    <property type="entry name" value="Mitochondrial import inner membrane translocase subunit TIM44"/>
    <property type="match status" value="1"/>
</dbReference>
<dbReference type="Gene3D" id="3.10.450.240">
    <property type="match status" value="1"/>
</dbReference>
<dbReference type="InterPro" id="IPR032710">
    <property type="entry name" value="NTF2-like_dom_sf"/>
</dbReference>
<dbReference type="InterPro" id="IPR017303">
    <property type="entry name" value="Tim44"/>
</dbReference>
<dbReference type="InterPro" id="IPR039544">
    <property type="entry name" value="Tim44-like"/>
</dbReference>
<dbReference type="InterPro" id="IPR007379">
    <property type="entry name" value="Tim44-like_dom"/>
</dbReference>
<dbReference type="PANTHER" id="PTHR10721">
    <property type="entry name" value="MITOCHONDRIAL IMPORT INNER MEMBRANE TRANSLOCASE SUBUNIT TIM44"/>
    <property type="match status" value="1"/>
</dbReference>
<dbReference type="PANTHER" id="PTHR10721:SF1">
    <property type="entry name" value="MITOCHONDRIAL IMPORT INNER MEMBRANE TRANSLOCASE SUBUNIT TIM44"/>
    <property type="match status" value="1"/>
</dbReference>
<dbReference type="Pfam" id="PF04280">
    <property type="entry name" value="Tim44"/>
    <property type="match status" value="1"/>
</dbReference>
<dbReference type="PIRSF" id="PIRSF037871">
    <property type="entry name" value="TIM44"/>
    <property type="match status" value="1"/>
</dbReference>
<dbReference type="SMART" id="SM00978">
    <property type="entry name" value="Tim44"/>
    <property type="match status" value="1"/>
</dbReference>
<dbReference type="SUPFAM" id="SSF54427">
    <property type="entry name" value="NTF2-like"/>
    <property type="match status" value="1"/>
</dbReference>
<feature type="transit peptide" description="Mitochondrion" evidence="1">
    <location>
        <begin position="1"/>
        <end status="unknown"/>
    </location>
</feature>
<feature type="chain" id="PRO_0000034319" description="Mitochondrial import inner membrane translocase subunit TIM44">
    <location>
        <begin status="unknown"/>
        <end position="431"/>
    </location>
</feature>
<feature type="region of interest" description="Interaction with SSC1" evidence="3">
    <location>
        <begin position="43"/>
        <end position="209"/>
    </location>
</feature>
<feature type="binding site" evidence="1">
    <location>
        <begin position="101"/>
        <end position="108"/>
    </location>
    <ligand>
        <name>ATP</name>
        <dbReference type="ChEBI" id="CHEBI:30616"/>
    </ligand>
</feature>
<feature type="mutagenesis site" description="Disrupts association with the translocase complex." evidence="3">
    <original>R</original>
    <variation>A</variation>
    <variation>K</variation>
    <location>
        <position position="180"/>
    </location>
</feature>
<feature type="helix" evidence="9">
    <location>
        <begin position="108"/>
        <end position="125"/>
    </location>
</feature>
<feature type="helix" evidence="9">
    <location>
        <begin position="127"/>
        <end position="151"/>
    </location>
</feature>
<feature type="helix" evidence="9">
    <location>
        <begin position="154"/>
        <end position="163"/>
    </location>
</feature>
<feature type="turn" evidence="9">
    <location>
        <begin position="164"/>
        <end position="166"/>
    </location>
</feature>
<feature type="helix" evidence="9">
    <location>
        <begin position="167"/>
        <end position="171"/>
    </location>
</feature>
<feature type="helix" evidence="9">
    <location>
        <begin position="177"/>
        <end position="189"/>
    </location>
</feature>
<feature type="helix" evidence="8">
    <location>
        <begin position="237"/>
        <end position="245"/>
    </location>
</feature>
<feature type="helix" evidence="9">
    <location>
        <begin position="256"/>
        <end position="264"/>
    </location>
</feature>
<feature type="helix" evidence="9">
    <location>
        <begin position="269"/>
        <end position="280"/>
    </location>
</feature>
<feature type="helix" evidence="9">
    <location>
        <begin position="286"/>
        <end position="295"/>
    </location>
</feature>
<feature type="helix" evidence="9">
    <location>
        <begin position="297"/>
        <end position="307"/>
    </location>
</feature>
<feature type="helix" evidence="9">
    <location>
        <begin position="310"/>
        <end position="316"/>
    </location>
</feature>
<feature type="helix" evidence="9">
    <location>
        <begin position="319"/>
        <end position="334"/>
    </location>
</feature>
<feature type="strand" evidence="9">
    <location>
        <begin position="337"/>
        <end position="339"/>
    </location>
</feature>
<feature type="strand" evidence="9">
    <location>
        <begin position="342"/>
        <end position="357"/>
    </location>
</feature>
<feature type="turn" evidence="9">
    <location>
        <begin position="358"/>
        <end position="361"/>
    </location>
</feature>
<feature type="strand" evidence="9">
    <location>
        <begin position="362"/>
        <end position="382"/>
    </location>
</feature>
<feature type="strand" evidence="9">
    <location>
        <begin position="385"/>
        <end position="404"/>
    </location>
</feature>
<feature type="turn" evidence="9">
    <location>
        <begin position="407"/>
        <end position="410"/>
    </location>
</feature>
<feature type="strand" evidence="9">
    <location>
        <begin position="412"/>
        <end position="414"/>
    </location>
</feature>
<feature type="strand" evidence="9">
    <location>
        <begin position="417"/>
        <end position="425"/>
    </location>
</feature>
<accession>Q01852</accession>
<accession>D6VVQ7</accession>
<gene>
    <name type="primary">TIM44</name>
    <name type="synonym">ISP45</name>
    <name type="synonym">MIM44</name>
    <name evidence="5" type="synonym">MPI1</name>
    <name type="ordered locus">YIL022W</name>
</gene>
<organism>
    <name type="scientific">Saccharomyces cerevisiae (strain ATCC 204508 / S288c)</name>
    <name type="common">Baker's yeast</name>
    <dbReference type="NCBI Taxonomy" id="559292"/>
    <lineage>
        <taxon>Eukaryota</taxon>
        <taxon>Fungi</taxon>
        <taxon>Dikarya</taxon>
        <taxon>Ascomycota</taxon>
        <taxon>Saccharomycotina</taxon>
        <taxon>Saccharomycetes</taxon>
        <taxon>Saccharomycetales</taxon>
        <taxon>Saccharomycetaceae</taxon>
        <taxon>Saccharomyces</taxon>
    </lineage>
</organism>
<sequence length="431" mass="48854">MHRSTFIRTSGTSSRTLTARYRSQYTGLLVARVLFSTSTTRAQGGNPRSPLQIFRDTFKKEWEKSQELQENIKTLQDASGKLGESEAYKKAREAYLKAQRGSTIVGKTLKKTGETMEHIATKAWESELGKNTRKAAAATAKKLDESFEPVRQTKIYKEVSEVIDDGESSRYGGFITKEQRRLKRERDLASGKRHRAVKSNEDAGTAVVATNIESKESFGKKVEDFKEKTVVGRSIQSLKNKLWDESENPLIVVMRKITNKVGGFFAETESSRVYSQFKLMDPTFSNESFTRHLREYIVPEILEAYVKGDVKVLKKWFSEAPFNVYAAQQKIFKEQDVYADGRILDIRGVEIVSAKLLAPQDIPVLVVGCRAQEINLYRKKKTGEIAAGDEANILMSSYAMVFTRDPEQIDDDETEGWKILEFVRGGSRQFT</sequence>
<protein>
    <recommendedName>
        <fullName>Mitochondrial import inner membrane translocase subunit TIM44</fullName>
    </recommendedName>
    <alternativeName>
        <fullName>Inner membrane import site protein 45</fullName>
        <shortName evidence="6">ISP45</shortName>
    </alternativeName>
    <alternativeName>
        <fullName>Membrane import machinery protein MIM44</fullName>
    </alternativeName>
    <alternativeName>
        <fullName>Mitochondrial protein import protein 1</fullName>
    </alternativeName>
</protein>
<comment type="function">
    <text evidence="3 4">Essential component of the PAM complex, a complex required for the translocation of transit peptide-containing proteins from the inner membrane into the mitochondrial matrix in an ATP-dependent manner. Recruits mitochondrial HSP70 and its co-chaperone (MGE1) to drive protein translocation into the matrix using ATP as an energy source.</text>
</comment>
<comment type="subunit">
    <text evidence="2 3 4">Component of the PAM complex, at least composed of SSC1 (mtHsp70), MGE1, TIM44, PAM16/TIM16, PAM17 and PAM18/TIM14. Forms part of the receptor complex that consists of at least 3 different proteins (TIM17, TIM23, TIM44).</text>
</comment>
<comment type="interaction">
    <interactant intactId="EBI-9141">
        <id>Q01852</id>
    </interactant>
    <interactant intactId="EBI-26019">
        <id>P42949</id>
        <label>PAM16</label>
    </interactant>
    <organismsDiffer>false</organismsDiffer>
    <experiments>3</experiments>
</comment>
<comment type="interaction">
    <interactant intactId="EBI-9141">
        <id>Q01852</id>
    </interactant>
    <interactant intactId="EBI-8637">
        <id>P0CS90</id>
        <label>SSC1</label>
    </interactant>
    <organismsDiffer>false</organismsDiffer>
    <experiments>4</experiments>
</comment>
<comment type="interaction">
    <interactant intactId="EBI-9141">
        <id>Q01852</id>
    </interactant>
    <interactant intactId="EBI-9127">
        <id>P39515</id>
        <label>TIM17</label>
    </interactant>
    <organismsDiffer>false</organismsDiffer>
    <experiments>2</experiments>
</comment>
<comment type="interaction">
    <interactant intactId="EBI-9141">
        <id>Q01852</id>
    </interactant>
    <interactant intactId="EBI-9136">
        <id>P32897</id>
        <label>TIM23</label>
    </interactant>
    <organismsDiffer>false</organismsDiffer>
    <experiments>8</experiments>
</comment>
<comment type="subcellular location">
    <subcellularLocation>
        <location evidence="3">Mitochondrion inner membrane</location>
        <topology evidence="3">Peripheral membrane protein</topology>
    </subcellularLocation>
</comment>
<comment type="similarity">
    <text evidence="7">Belongs to the Tim44 family.</text>
</comment>
<reference key="1">
    <citation type="journal article" date="1992" name="EMBO J.">
        <title>MPI1, an essential gene encoding a mitochondrial membrane protein, is possibly involved in protein import into yeast mitochondria.</title>
        <authorList>
            <person name="Maarse A.C."/>
            <person name="Blom J."/>
            <person name="Grivell L.A."/>
            <person name="Meijer M."/>
        </authorList>
    </citation>
    <scope>NUCLEOTIDE SEQUENCE [GENOMIC DNA]</scope>
    <source>
        <strain>ATCC 204510 / AB320</strain>
    </source>
</reference>
<reference key="2">
    <citation type="journal article" date="1997" name="Nature">
        <title>The nucleotide sequence of Saccharomyces cerevisiae chromosome IX.</title>
        <authorList>
            <person name="Churcher C.M."/>
            <person name="Bowman S."/>
            <person name="Badcock K."/>
            <person name="Bankier A.T."/>
            <person name="Brown D."/>
            <person name="Chillingworth T."/>
            <person name="Connor R."/>
            <person name="Devlin K."/>
            <person name="Gentles S."/>
            <person name="Hamlin N."/>
            <person name="Harris D.E."/>
            <person name="Horsnell T."/>
            <person name="Hunt S."/>
            <person name="Jagels K."/>
            <person name="Jones M."/>
            <person name="Lye G."/>
            <person name="Moule S."/>
            <person name="Odell C."/>
            <person name="Pearson D."/>
            <person name="Rajandream M.A."/>
            <person name="Rice P."/>
            <person name="Rowley N."/>
            <person name="Skelton J."/>
            <person name="Smith V."/>
            <person name="Walsh S.V."/>
            <person name="Whitehead S."/>
            <person name="Barrell B.G."/>
        </authorList>
    </citation>
    <scope>NUCLEOTIDE SEQUENCE [LARGE SCALE GENOMIC DNA]</scope>
    <source>
        <strain>ATCC 204508 / S288c</strain>
    </source>
</reference>
<reference key="3">
    <citation type="journal article" date="2014" name="G3 (Bethesda)">
        <title>The reference genome sequence of Saccharomyces cerevisiae: Then and now.</title>
        <authorList>
            <person name="Engel S.R."/>
            <person name="Dietrich F.S."/>
            <person name="Fisk D.G."/>
            <person name="Binkley G."/>
            <person name="Balakrishnan R."/>
            <person name="Costanzo M.C."/>
            <person name="Dwight S.S."/>
            <person name="Hitz B.C."/>
            <person name="Karra K."/>
            <person name="Nash R.S."/>
            <person name="Weng S."/>
            <person name="Wong E.D."/>
            <person name="Lloyd P."/>
            <person name="Skrzypek M.S."/>
            <person name="Miyasato S.R."/>
            <person name="Simison M."/>
            <person name="Cherry J.M."/>
        </authorList>
    </citation>
    <scope>GENOME REANNOTATION</scope>
    <source>
        <strain>ATCC 204508 / S288c</strain>
    </source>
</reference>
<reference key="4">
    <citation type="journal article" date="1993" name="EMBO J.">
        <title>Protein import into yeast mitochondria: the inner membrane import site protein ISP45 is the MPI1 gene product.</title>
        <authorList>
            <person name="Horst M."/>
            <person name="Jenoe P."/>
            <person name="Kronidou N.G."/>
            <person name="Bolliger L."/>
            <person name="Oppliger W."/>
            <person name="Scherer P."/>
            <person name="Manning-Krieg U."/>
            <person name="Jascur T."/>
            <person name="Schatz G."/>
        </authorList>
    </citation>
    <scope>PARTIAL PROTEIN SEQUENCE</scope>
    <scope>CHARACTERIZATION</scope>
</reference>
<reference key="5">
    <citation type="journal article" date="2005" name="Mol. Cell. Biol.">
        <title>Pam17 is required for architecture and translocation activity of the mitochondrial protein import motor.</title>
        <authorList>
            <person name="van der Laan M."/>
            <person name="Chacinska A."/>
            <person name="Lind M."/>
            <person name="Perschil I."/>
            <person name="Sickmann A."/>
            <person name="Meyer H.E."/>
            <person name="Guiard B."/>
            <person name="Meisinger C."/>
            <person name="Pfanner N."/>
            <person name="Rehling P."/>
        </authorList>
    </citation>
    <scope>IDENTIFICATION IN THE PAM COMPLEX WITH PAM16; PAM17; PAM18; MGE1 AND SSC1</scope>
</reference>
<reference key="6">
    <citation type="journal article" date="2008" name="Mol. Cell. Biol.">
        <title>Residues of Tim44 involved in both association with the translocon of the inner mitochondrial membrane and regulation of mitochondrial Hsp70 tethering.</title>
        <authorList>
            <person name="Schiller D."/>
            <person name="Cheng Y.C."/>
            <person name="Liu Q."/>
            <person name="Walter W."/>
            <person name="Craig E.A."/>
        </authorList>
    </citation>
    <scope>INTERACTION WITH SSC1</scope>
    <scope>FUNCTION</scope>
    <scope>SUBUNIT</scope>
    <scope>SUBCELLULAR LOCATION</scope>
    <scope>MUTAGENESIS OF ARG-180</scope>
</reference>
<reference key="7">
    <citation type="journal article" date="2015" name="Elife">
        <title>Protein translocation channel of mitochondrial inner membrane and matrix-exposed import motor communicate via two-domain coupling protein.</title>
        <authorList>
            <person name="Banerjee R."/>
            <person name="Gladkova C."/>
            <person name="Mapa K."/>
            <person name="Witte G."/>
            <person name="Mokranjac D."/>
        </authorList>
    </citation>
    <scope>FUNCTION</scope>
    <scope>SUBUNIT</scope>
</reference>
<reference key="8">
    <citation type="journal article" date="2006" name="J. Mol. Biol.">
        <title>Crystal structure of yeast mitochondrial peripheral membrane protein Tim44p C-terminal domain.</title>
        <authorList>
            <person name="Josyula R."/>
            <person name="Jin Z."/>
            <person name="Fu Z."/>
            <person name="Sha B."/>
        </authorList>
    </citation>
    <scope>X-RAY CRYSTALLOGRAPHY (3.20 ANGSTROMS) OF 234-425</scope>
</reference>
<name>TIM44_YEAST</name>
<keyword id="KW-0002">3D-structure</keyword>
<keyword id="KW-0067">ATP-binding</keyword>
<keyword id="KW-0903">Direct protein sequencing</keyword>
<keyword id="KW-0472">Membrane</keyword>
<keyword id="KW-0496">Mitochondrion</keyword>
<keyword id="KW-0999">Mitochondrion inner membrane</keyword>
<keyword id="KW-0547">Nucleotide-binding</keyword>
<keyword id="KW-0653">Protein transport</keyword>
<keyword id="KW-1185">Reference proteome</keyword>
<keyword id="KW-0809">Transit peptide</keyword>
<keyword id="KW-0811">Translocation</keyword>
<keyword id="KW-0813">Transport</keyword>